<feature type="chain" id="PRO_0000410710" description="Putative 12-oxophytodienoate reductase 4">
    <location>
        <begin position="1"/>
        <end position="380"/>
    </location>
</feature>
<feature type="active site" description="Proton donor" evidence="1">
    <location>
        <position position="188"/>
    </location>
</feature>
<feature type="binding site" evidence="1">
    <location>
        <begin position="36"/>
        <end position="38"/>
    </location>
    <ligand>
        <name>FMN</name>
        <dbReference type="ChEBI" id="CHEBI:58210"/>
    </ligand>
</feature>
<feature type="binding site" evidence="1">
    <location>
        <position position="69"/>
    </location>
    <ligand>
        <name>FMN</name>
        <dbReference type="ChEBI" id="CHEBI:58210"/>
    </ligand>
</feature>
<feature type="binding site" evidence="1">
    <location>
        <position position="111"/>
    </location>
    <ligand>
        <name>FMN</name>
        <dbReference type="ChEBI" id="CHEBI:58210"/>
    </ligand>
</feature>
<feature type="binding site" evidence="1">
    <location>
        <begin position="183"/>
        <end position="186"/>
    </location>
    <ligand>
        <name>substrate</name>
    </ligand>
</feature>
<feature type="binding site" evidence="1">
    <location>
        <position position="235"/>
    </location>
    <ligand>
        <name>FMN</name>
        <dbReference type="ChEBI" id="CHEBI:58210"/>
    </ligand>
</feature>
<feature type="binding site" evidence="1">
    <location>
        <position position="276"/>
    </location>
    <ligand>
        <name>substrate</name>
    </ligand>
</feature>
<feature type="binding site" evidence="1">
    <location>
        <position position="306"/>
    </location>
    <ligand>
        <name>FMN</name>
        <dbReference type="ChEBI" id="CHEBI:58210"/>
    </ligand>
</feature>
<feature type="binding site" evidence="1">
    <location>
        <begin position="327"/>
        <end position="328"/>
    </location>
    <ligand>
        <name>FMN</name>
        <dbReference type="ChEBI" id="CHEBI:58210"/>
    </ligand>
</feature>
<protein>
    <recommendedName>
        <fullName>Putative 12-oxophytodienoate reductase 4</fullName>
        <ecNumber>1.3.1.-</ecNumber>
    </recommendedName>
    <alternativeName>
        <fullName>OPDA-reductase 4</fullName>
        <shortName>OsOPR4</shortName>
    </alternativeName>
</protein>
<dbReference type="EC" id="1.3.1.-"/>
<dbReference type="EMBL" id="AP003525">
    <property type="protein sequence ID" value="BAD35321.1"/>
    <property type="molecule type" value="Genomic_DNA"/>
</dbReference>
<dbReference type="EMBL" id="AP004741">
    <property type="protein sequence ID" value="BAD35829.1"/>
    <property type="molecule type" value="Genomic_DNA"/>
</dbReference>
<dbReference type="EMBL" id="AP008212">
    <property type="protein sequence ID" value="BAF19055.1"/>
    <property type="status" value="ALT_SEQ"/>
    <property type="molecule type" value="Genomic_DNA"/>
</dbReference>
<dbReference type="EMBL" id="AP014962">
    <property type="protein sequence ID" value="BAS96783.1"/>
    <property type="molecule type" value="Genomic_DNA"/>
</dbReference>
<dbReference type="EMBL" id="CM000143">
    <property type="protein sequence ID" value="EAZ36271.1"/>
    <property type="molecule type" value="Genomic_DNA"/>
</dbReference>
<dbReference type="EMBL" id="AK105590">
    <property type="protein sequence ID" value="BAG97304.1"/>
    <property type="molecule type" value="mRNA"/>
</dbReference>
<dbReference type="RefSeq" id="XP_015640930.1">
    <property type="nucleotide sequence ID" value="XM_015785444.1"/>
</dbReference>
<dbReference type="SMR" id="Q69TH8"/>
<dbReference type="FunCoup" id="Q69TH8">
    <property type="interactions" value="166"/>
</dbReference>
<dbReference type="STRING" id="39947.Q69TH8"/>
<dbReference type="PaxDb" id="39947-Q69TH8"/>
<dbReference type="EnsemblPlants" id="Os06t0215900-02">
    <property type="protein sequence ID" value="Os06t0215900-02"/>
    <property type="gene ID" value="Os06g0215900"/>
</dbReference>
<dbReference type="Gramene" id="Os06t0215900-02">
    <property type="protein sequence ID" value="Os06t0215900-02"/>
    <property type="gene ID" value="Os06g0215900"/>
</dbReference>
<dbReference type="KEGG" id="dosa:Os06g0215900"/>
<dbReference type="eggNOG" id="KOG0134">
    <property type="taxonomic scope" value="Eukaryota"/>
</dbReference>
<dbReference type="InParanoid" id="Q69TH8"/>
<dbReference type="OMA" id="QIWGQGR"/>
<dbReference type="OrthoDB" id="1663137at2759"/>
<dbReference type="Proteomes" id="UP000000763">
    <property type="component" value="Chromosome 6"/>
</dbReference>
<dbReference type="Proteomes" id="UP000007752">
    <property type="component" value="Chromosome 6"/>
</dbReference>
<dbReference type="Proteomes" id="UP000059680">
    <property type="component" value="Chromosome 6"/>
</dbReference>
<dbReference type="ExpressionAtlas" id="Q69TH8">
    <property type="expression patterns" value="baseline and differential"/>
</dbReference>
<dbReference type="GO" id="GO:0010181">
    <property type="term" value="F:FMN binding"/>
    <property type="evidence" value="ECO:0007669"/>
    <property type="project" value="InterPro"/>
</dbReference>
<dbReference type="GO" id="GO:0016491">
    <property type="term" value="F:oxidoreductase activity"/>
    <property type="evidence" value="ECO:0000318"/>
    <property type="project" value="GO_Central"/>
</dbReference>
<dbReference type="GO" id="GO:0009695">
    <property type="term" value="P:jasmonic acid biosynthetic process"/>
    <property type="evidence" value="ECO:0000318"/>
    <property type="project" value="GO_Central"/>
</dbReference>
<dbReference type="GO" id="GO:0031408">
    <property type="term" value="P:oxylipin biosynthetic process"/>
    <property type="evidence" value="ECO:0000318"/>
    <property type="project" value="GO_Central"/>
</dbReference>
<dbReference type="CDD" id="cd02933">
    <property type="entry name" value="OYE_like_FMN"/>
    <property type="match status" value="1"/>
</dbReference>
<dbReference type="FunFam" id="3.20.20.70:FF:000073">
    <property type="entry name" value="12-oxophytodienoate reductase 3"/>
    <property type="match status" value="1"/>
</dbReference>
<dbReference type="Gene3D" id="3.20.20.70">
    <property type="entry name" value="Aldolase class I"/>
    <property type="match status" value="1"/>
</dbReference>
<dbReference type="InterPro" id="IPR013785">
    <property type="entry name" value="Aldolase_TIM"/>
</dbReference>
<dbReference type="InterPro" id="IPR001155">
    <property type="entry name" value="OxRdtase_FMN_N"/>
</dbReference>
<dbReference type="InterPro" id="IPR045247">
    <property type="entry name" value="Oye-like"/>
</dbReference>
<dbReference type="PANTHER" id="PTHR22893:SF44">
    <property type="entry name" value="12-OXOPHYTODIENOATE REDUCTASE 1"/>
    <property type="match status" value="1"/>
</dbReference>
<dbReference type="PANTHER" id="PTHR22893">
    <property type="entry name" value="NADH OXIDOREDUCTASE-RELATED"/>
    <property type="match status" value="1"/>
</dbReference>
<dbReference type="Pfam" id="PF00724">
    <property type="entry name" value="Oxidored_FMN"/>
    <property type="match status" value="1"/>
</dbReference>
<dbReference type="SUPFAM" id="SSF51395">
    <property type="entry name" value="FMN-linked oxidoreductases"/>
    <property type="match status" value="1"/>
</dbReference>
<proteinExistence type="evidence at transcript level"/>
<organism>
    <name type="scientific">Oryza sativa subsp. japonica</name>
    <name type="common">Rice</name>
    <dbReference type="NCBI Taxonomy" id="39947"/>
    <lineage>
        <taxon>Eukaryota</taxon>
        <taxon>Viridiplantae</taxon>
        <taxon>Streptophyta</taxon>
        <taxon>Embryophyta</taxon>
        <taxon>Tracheophyta</taxon>
        <taxon>Spermatophyta</taxon>
        <taxon>Magnoliopsida</taxon>
        <taxon>Liliopsida</taxon>
        <taxon>Poales</taxon>
        <taxon>Poaceae</taxon>
        <taxon>BOP clade</taxon>
        <taxon>Oryzoideae</taxon>
        <taxon>Oryzeae</taxon>
        <taxon>Oryzinae</taxon>
        <taxon>Oryza</taxon>
        <taxon>Oryza sativa</taxon>
    </lineage>
</organism>
<evidence type="ECO:0000250" key="1"/>
<evidence type="ECO:0000305" key="2"/>
<reference key="1">
    <citation type="journal article" date="2005" name="Nature">
        <title>The map-based sequence of the rice genome.</title>
        <authorList>
            <consortium name="International rice genome sequencing project (IRGSP)"/>
        </authorList>
    </citation>
    <scope>NUCLEOTIDE SEQUENCE [LARGE SCALE GENOMIC DNA]</scope>
    <source>
        <strain>cv. Nipponbare</strain>
    </source>
</reference>
<reference key="2">
    <citation type="journal article" date="2008" name="Nucleic Acids Res.">
        <title>The rice annotation project database (RAP-DB): 2008 update.</title>
        <authorList>
            <consortium name="The rice annotation project (RAP)"/>
        </authorList>
    </citation>
    <scope>GENOME REANNOTATION</scope>
    <source>
        <strain>cv. Nipponbare</strain>
    </source>
</reference>
<reference key="3">
    <citation type="journal article" date="2013" name="Rice">
        <title>Improvement of the Oryza sativa Nipponbare reference genome using next generation sequence and optical map data.</title>
        <authorList>
            <person name="Kawahara Y."/>
            <person name="de la Bastide M."/>
            <person name="Hamilton J.P."/>
            <person name="Kanamori H."/>
            <person name="McCombie W.R."/>
            <person name="Ouyang S."/>
            <person name="Schwartz D.C."/>
            <person name="Tanaka T."/>
            <person name="Wu J."/>
            <person name="Zhou S."/>
            <person name="Childs K.L."/>
            <person name="Davidson R.M."/>
            <person name="Lin H."/>
            <person name="Quesada-Ocampo L."/>
            <person name="Vaillancourt B."/>
            <person name="Sakai H."/>
            <person name="Lee S.S."/>
            <person name="Kim J."/>
            <person name="Numa H."/>
            <person name="Itoh T."/>
            <person name="Buell C.R."/>
            <person name="Matsumoto T."/>
        </authorList>
    </citation>
    <scope>GENOME REANNOTATION</scope>
    <source>
        <strain>cv. Nipponbare</strain>
    </source>
</reference>
<reference key="4">
    <citation type="journal article" date="2005" name="PLoS Biol.">
        <title>The genomes of Oryza sativa: a history of duplications.</title>
        <authorList>
            <person name="Yu J."/>
            <person name="Wang J."/>
            <person name="Lin W."/>
            <person name="Li S."/>
            <person name="Li H."/>
            <person name="Zhou J."/>
            <person name="Ni P."/>
            <person name="Dong W."/>
            <person name="Hu S."/>
            <person name="Zeng C."/>
            <person name="Zhang J."/>
            <person name="Zhang Y."/>
            <person name="Li R."/>
            <person name="Xu Z."/>
            <person name="Li S."/>
            <person name="Li X."/>
            <person name="Zheng H."/>
            <person name="Cong L."/>
            <person name="Lin L."/>
            <person name="Yin J."/>
            <person name="Geng J."/>
            <person name="Li G."/>
            <person name="Shi J."/>
            <person name="Liu J."/>
            <person name="Lv H."/>
            <person name="Li J."/>
            <person name="Wang J."/>
            <person name="Deng Y."/>
            <person name="Ran L."/>
            <person name="Shi X."/>
            <person name="Wang X."/>
            <person name="Wu Q."/>
            <person name="Li C."/>
            <person name="Ren X."/>
            <person name="Wang J."/>
            <person name="Wang X."/>
            <person name="Li D."/>
            <person name="Liu D."/>
            <person name="Zhang X."/>
            <person name="Ji Z."/>
            <person name="Zhao W."/>
            <person name="Sun Y."/>
            <person name="Zhang Z."/>
            <person name="Bao J."/>
            <person name="Han Y."/>
            <person name="Dong L."/>
            <person name="Ji J."/>
            <person name="Chen P."/>
            <person name="Wu S."/>
            <person name="Liu J."/>
            <person name="Xiao Y."/>
            <person name="Bu D."/>
            <person name="Tan J."/>
            <person name="Yang L."/>
            <person name="Ye C."/>
            <person name="Zhang J."/>
            <person name="Xu J."/>
            <person name="Zhou Y."/>
            <person name="Yu Y."/>
            <person name="Zhang B."/>
            <person name="Zhuang S."/>
            <person name="Wei H."/>
            <person name="Liu B."/>
            <person name="Lei M."/>
            <person name="Yu H."/>
            <person name="Li Y."/>
            <person name="Xu H."/>
            <person name="Wei S."/>
            <person name="He X."/>
            <person name="Fang L."/>
            <person name="Zhang Z."/>
            <person name="Zhang Y."/>
            <person name="Huang X."/>
            <person name="Su Z."/>
            <person name="Tong W."/>
            <person name="Li J."/>
            <person name="Tong Z."/>
            <person name="Li S."/>
            <person name="Ye J."/>
            <person name="Wang L."/>
            <person name="Fang L."/>
            <person name="Lei T."/>
            <person name="Chen C.-S."/>
            <person name="Chen H.-C."/>
            <person name="Xu Z."/>
            <person name="Li H."/>
            <person name="Huang H."/>
            <person name="Zhang F."/>
            <person name="Xu H."/>
            <person name="Li N."/>
            <person name="Zhao C."/>
            <person name="Li S."/>
            <person name="Dong L."/>
            <person name="Huang Y."/>
            <person name="Li L."/>
            <person name="Xi Y."/>
            <person name="Qi Q."/>
            <person name="Li W."/>
            <person name="Zhang B."/>
            <person name="Hu W."/>
            <person name="Zhang Y."/>
            <person name="Tian X."/>
            <person name="Jiao Y."/>
            <person name="Liang X."/>
            <person name="Jin J."/>
            <person name="Gao L."/>
            <person name="Zheng W."/>
            <person name="Hao B."/>
            <person name="Liu S.-M."/>
            <person name="Wang W."/>
            <person name="Yuan L."/>
            <person name="Cao M."/>
            <person name="McDermott J."/>
            <person name="Samudrala R."/>
            <person name="Wang J."/>
            <person name="Wong G.K.-S."/>
            <person name="Yang H."/>
        </authorList>
    </citation>
    <scope>NUCLEOTIDE SEQUENCE [LARGE SCALE GENOMIC DNA]</scope>
    <source>
        <strain>cv. Nipponbare</strain>
    </source>
</reference>
<reference key="5">
    <citation type="journal article" date="2003" name="Science">
        <title>Collection, mapping, and annotation of over 28,000 cDNA clones from japonica rice.</title>
        <authorList>
            <consortium name="The rice full-length cDNA consortium"/>
        </authorList>
    </citation>
    <scope>NUCLEOTIDE SEQUENCE [LARGE SCALE MRNA]</scope>
    <source>
        <strain>cv. Nipponbare</strain>
    </source>
</reference>
<comment type="function">
    <text evidence="1">Putative oxophytodienoate reductase that may be involved in the biosynthesis or metabolism of oxylipin signaling molecules.</text>
</comment>
<comment type="cofactor">
    <cofactor>
        <name>FMN</name>
        <dbReference type="ChEBI" id="CHEBI:58210"/>
    </cofactor>
</comment>
<comment type="similarity">
    <text evidence="2">Belongs to the NADH:flavin oxidoreductase/NADH oxidase family.</text>
</comment>
<comment type="sequence caution" evidence="2">
    <conflict type="erroneous gene model prediction">
        <sequence resource="EMBL-CDS" id="BAF19055"/>
    </conflict>
</comment>
<accession>Q69TH8</accession>
<accession>A0A0P0WUK4</accession>
<accession>Q0DDL8</accession>
<keyword id="KW-0275">Fatty acid biosynthesis</keyword>
<keyword id="KW-0276">Fatty acid metabolism</keyword>
<keyword id="KW-0285">Flavoprotein</keyword>
<keyword id="KW-0288">FMN</keyword>
<keyword id="KW-0444">Lipid biosynthesis</keyword>
<keyword id="KW-0443">Lipid metabolism</keyword>
<keyword id="KW-0521">NADP</keyword>
<keyword id="KW-0560">Oxidoreductase</keyword>
<keyword id="KW-0925">Oxylipin biosynthesis</keyword>
<keyword id="KW-1185">Reference proteome</keyword>
<gene>
    <name type="primary">OPR4</name>
    <name type="synonym">OPR10</name>
    <name type="ordered locus">Os06g0215900</name>
    <name type="ordered locus">LOC_Os06g11240</name>
    <name type="ORF">OsJ_20592</name>
    <name type="ORF">OSJNBb0024N18.8</name>
    <name type="ORF">P0537F07.30</name>
</gene>
<name>OPR4_ORYSJ</name>
<sequence length="380" mass="42432">MAREAEKDAAAAAEIPLLTPYKMGRFELSHRVVLAPLTRNRSYGNVPRPHAVLYYTQRATSGGLLVTEATGVSDTAQGYPDTPGIWTQQQVEAWKPIVDAVHRKGALFICQLWHVGRVSTNEYQPDGQAPISSTDRQITPDDSGIVYSKPRRLRTEEIPQIIDDFRRAARNAIEAGFDGVEIHGAHGYLLEQFMKDSANDRSDEYGGSLENRCRFVVEVIDAIVAEVGAHRVGIRLSPFIDYMDCVDSDPVALGSYMVQQLNKHPGFLYCHMVEPRMAIVEGRRKITHGLLPFRKLFNGTFIAAGGYDREEGNKVIADGYADLVAYGRHFLANPDLPKRFAINAPLNKYNRSTFYIQDPVVGYTDYPFLDEKDEGAATYA</sequence>